<accession>P50629</accession>
<name>MVP_TBSV8</name>
<protein>
    <recommendedName>
        <fullName>Movement protein</fullName>
    </recommendedName>
    <alternativeName>
        <fullName>p22</fullName>
    </alternativeName>
</protein>
<organismHost>
    <name type="scientific">Capsicum annuum</name>
    <name type="common">Capsicum pepper</name>
    <dbReference type="NCBI Taxonomy" id="4072"/>
</organismHost>
<organismHost>
    <name type="scientific">Malus</name>
    <dbReference type="NCBI Taxonomy" id="3749"/>
</organismHost>
<organismHost>
    <name type="scientific">Pyrus</name>
    <name type="common">pears</name>
    <dbReference type="NCBI Taxonomy" id="3766"/>
</organismHost>
<organismHost>
    <name type="scientific">Solanum lycopersicum</name>
    <name type="common">Tomato</name>
    <name type="synonym">Lycopersicon esculentum</name>
    <dbReference type="NCBI Taxonomy" id="4081"/>
</organismHost>
<organismHost>
    <name type="scientific">Solanum melongena</name>
    <name type="common">eggplant</name>
    <dbReference type="NCBI Taxonomy" id="4111"/>
</organismHost>
<organismHost>
    <name type="scientific">Tolmiea menziesii</name>
    <dbReference type="NCBI Taxonomy" id="29777"/>
</organismHost>
<organismHost>
    <name type="scientific">Tulipa</name>
    <dbReference type="NCBI Taxonomy" id="13305"/>
</organismHost>
<feature type="chain" id="PRO_0000222888" description="Movement protein">
    <location>
        <begin position="1"/>
        <end position="188"/>
    </location>
</feature>
<gene>
    <name type="ORF">ORF3</name>
</gene>
<reference key="1">
    <citation type="journal article" date="1996" name="Phytopathology">
        <title>Different tomato bushy stunt virus strains cause disease outbreaks on solanaceous crops in Spain.</title>
        <authorList>
            <person name="Luis-Areteaga M."/>
            <person name="Rodriguez-Cerezo E."/>
            <person name="Fraile A."/>
            <person name="Saez E."/>
            <person name="Garcia-Arenal F."/>
        </authorList>
        <dbReference type="AGRICOLA" id="IND20581771"/>
    </citation>
    <scope>NUCLEOTIDE SEQUENCE [GENOMIC RNA]</scope>
</reference>
<dbReference type="EMBL" id="Z68897">
    <property type="protein sequence ID" value="CAA93127.1"/>
    <property type="molecule type" value="Genomic_RNA"/>
</dbReference>
<dbReference type="GO" id="GO:0033644">
    <property type="term" value="C:host cell membrane"/>
    <property type="evidence" value="ECO:0007669"/>
    <property type="project" value="UniProtKB-SubCell"/>
</dbReference>
<dbReference type="GO" id="GO:0016020">
    <property type="term" value="C:membrane"/>
    <property type="evidence" value="ECO:0007669"/>
    <property type="project" value="UniProtKB-KW"/>
</dbReference>
<dbReference type="GO" id="GO:0019028">
    <property type="term" value="C:viral capsid"/>
    <property type="evidence" value="ECO:0007669"/>
    <property type="project" value="InterPro"/>
</dbReference>
<dbReference type="GO" id="GO:0003723">
    <property type="term" value="F:RNA binding"/>
    <property type="evidence" value="ECO:0007669"/>
    <property type="project" value="UniProtKB-KW"/>
</dbReference>
<dbReference type="GO" id="GO:0046740">
    <property type="term" value="P:transport of virus in host, cell to cell"/>
    <property type="evidence" value="ECO:0007669"/>
    <property type="project" value="UniProtKB-KW"/>
</dbReference>
<dbReference type="InterPro" id="IPR005332">
    <property type="entry name" value="TBSV_p22"/>
</dbReference>
<dbReference type="Pfam" id="PF03558">
    <property type="entry name" value="TBSV_P22"/>
    <property type="match status" value="1"/>
</dbReference>
<organism>
    <name type="scientific">Tomato bushy stunt virus (strain B8)</name>
    <name type="common">TBSV</name>
    <dbReference type="NCBI Taxonomy" id="70155"/>
    <lineage>
        <taxon>Viruses</taxon>
        <taxon>Riboviria</taxon>
        <taxon>Orthornavirae</taxon>
        <taxon>Kitrinoviricota</taxon>
        <taxon>Tolucaviricetes</taxon>
        <taxon>Tolivirales</taxon>
        <taxon>Tombusviridae</taxon>
        <taxon>Procedovirinae</taxon>
        <taxon>Tombusvirus</taxon>
        <taxon>Tombusvirus lycopersici</taxon>
    </lineage>
</organism>
<comment type="function">
    <text evidence="1">Transports viral genome to neighboring plant cells directly through plasmosdesmata, without any budding. The movement protein allows efficient cell to cell propagation, by bypassing the host cell wall barrier (By similarity).</text>
</comment>
<comment type="subunit">
    <text evidence="1">Interacts with host protein HFI22.</text>
</comment>
<comment type="subcellular location">
    <subcellularLocation>
        <location evidence="1">Host membrane</location>
    </subcellularLocation>
</comment>
<comment type="PTM">
    <text evidence="1">Phosphorylated.</text>
</comment>
<comment type="similarity">
    <text evidence="2">Belongs to the tombusvirus/aureusvirus movement protein p22 family.</text>
</comment>
<proteinExistence type="inferred from homology"/>
<keyword id="KW-1043">Host membrane</keyword>
<keyword id="KW-0945">Host-virus interaction</keyword>
<keyword id="KW-0472">Membrane</keyword>
<keyword id="KW-0597">Phosphoprotein</keyword>
<keyword id="KW-0694">RNA-binding</keyword>
<keyword id="KW-0813">Transport</keyword>
<keyword id="KW-0916">Viral movement protein</keyword>
<evidence type="ECO:0000250" key="1"/>
<evidence type="ECO:0000305" key="2"/>
<sequence>MDTEYEQVNKPWNELYQETTLGNQLMVNVGMEDPEVPLLPSNFLTKVRVGLSGGYITMRRIRIKIIPLVSRKAGVSGKLYLRDISDTTGRKLHCTESLDLGREIRLTMQHLDFSVSTRSDVPIVFGFEELVSPFLEGRELFSISVRWQFGLSKNCYSLPQSKWKVMYQEDALNVKPSKKKASKTDSSV</sequence>